<evidence type="ECO:0000255" key="1">
    <source>
        <dbReference type="HAMAP-Rule" id="MF_00503"/>
    </source>
</evidence>
<evidence type="ECO:0000305" key="2"/>
<comment type="function">
    <text evidence="1">Binds to the 23S rRNA.</text>
</comment>
<comment type="similarity">
    <text evidence="1">Belongs to the bacterial ribosomal protein bL9 family.</text>
</comment>
<reference key="1">
    <citation type="submission" date="2007-07" db="EMBL/GenBank/DDBJ databases">
        <title>Complete genome sequence of Campylobacter jejuni subsp doylei 269.97 isolated from human blood.</title>
        <authorList>
            <person name="Fouts D.E."/>
            <person name="Mongodin E.F."/>
            <person name="Puiu D."/>
            <person name="Sebastian Y."/>
            <person name="Miller W.G."/>
            <person name="Mandrell R.E."/>
            <person name="Lastovica A.J."/>
            <person name="Nelson K.E."/>
        </authorList>
    </citation>
    <scope>NUCLEOTIDE SEQUENCE [LARGE SCALE GENOMIC DNA]</scope>
    <source>
        <strain>ATCC BAA-1458 / RM4099 / 269.97</strain>
    </source>
</reference>
<sequence>MKVLLIKDVKALGKAGEIKEVKDGYGQNFLIAKGFAKAATNEVLRKYESDKKKEAENLRFEIANLEKLKEELSKITLEISKPVGANGSLFGGVTKDEIAHALKEQSHIEIDKKSLECDTLKSLGIHEVSVKLGHAIHAKFNISIKAE</sequence>
<dbReference type="EMBL" id="CP000768">
    <property type="protein sequence ID" value="ABS43805.1"/>
    <property type="molecule type" value="Genomic_DNA"/>
</dbReference>
<dbReference type="SMR" id="A7H4F0"/>
<dbReference type="KEGG" id="cjd:JJD26997_1335"/>
<dbReference type="HOGENOM" id="CLU_078938_3_0_7"/>
<dbReference type="Proteomes" id="UP000002302">
    <property type="component" value="Chromosome"/>
</dbReference>
<dbReference type="GO" id="GO:1990904">
    <property type="term" value="C:ribonucleoprotein complex"/>
    <property type="evidence" value="ECO:0007669"/>
    <property type="project" value="UniProtKB-KW"/>
</dbReference>
<dbReference type="GO" id="GO:0005840">
    <property type="term" value="C:ribosome"/>
    <property type="evidence" value="ECO:0007669"/>
    <property type="project" value="UniProtKB-KW"/>
</dbReference>
<dbReference type="GO" id="GO:0019843">
    <property type="term" value="F:rRNA binding"/>
    <property type="evidence" value="ECO:0007669"/>
    <property type="project" value="UniProtKB-UniRule"/>
</dbReference>
<dbReference type="GO" id="GO:0003735">
    <property type="term" value="F:structural constituent of ribosome"/>
    <property type="evidence" value="ECO:0007669"/>
    <property type="project" value="InterPro"/>
</dbReference>
<dbReference type="GO" id="GO:0006412">
    <property type="term" value="P:translation"/>
    <property type="evidence" value="ECO:0007669"/>
    <property type="project" value="UniProtKB-UniRule"/>
</dbReference>
<dbReference type="FunFam" id="3.40.5.10:FF:000002">
    <property type="entry name" value="50S ribosomal protein L9"/>
    <property type="match status" value="1"/>
</dbReference>
<dbReference type="Gene3D" id="3.10.430.100">
    <property type="entry name" value="Ribosomal protein L9, C-terminal domain"/>
    <property type="match status" value="1"/>
</dbReference>
<dbReference type="Gene3D" id="3.40.5.10">
    <property type="entry name" value="Ribosomal protein L9, N-terminal domain"/>
    <property type="match status" value="1"/>
</dbReference>
<dbReference type="HAMAP" id="MF_00503">
    <property type="entry name" value="Ribosomal_bL9"/>
    <property type="match status" value="1"/>
</dbReference>
<dbReference type="InterPro" id="IPR000244">
    <property type="entry name" value="Ribosomal_bL9"/>
</dbReference>
<dbReference type="InterPro" id="IPR009027">
    <property type="entry name" value="Ribosomal_bL9/RNase_H1_N"/>
</dbReference>
<dbReference type="InterPro" id="IPR020594">
    <property type="entry name" value="Ribosomal_bL9_bac/chp"/>
</dbReference>
<dbReference type="InterPro" id="IPR020069">
    <property type="entry name" value="Ribosomal_bL9_C"/>
</dbReference>
<dbReference type="InterPro" id="IPR036791">
    <property type="entry name" value="Ribosomal_bL9_C_sf"/>
</dbReference>
<dbReference type="InterPro" id="IPR020070">
    <property type="entry name" value="Ribosomal_bL9_N"/>
</dbReference>
<dbReference type="InterPro" id="IPR036935">
    <property type="entry name" value="Ribosomal_bL9_N_sf"/>
</dbReference>
<dbReference type="NCBIfam" id="TIGR00158">
    <property type="entry name" value="L9"/>
    <property type="match status" value="1"/>
</dbReference>
<dbReference type="PANTHER" id="PTHR21368">
    <property type="entry name" value="50S RIBOSOMAL PROTEIN L9"/>
    <property type="match status" value="1"/>
</dbReference>
<dbReference type="Pfam" id="PF03948">
    <property type="entry name" value="Ribosomal_L9_C"/>
    <property type="match status" value="1"/>
</dbReference>
<dbReference type="Pfam" id="PF01281">
    <property type="entry name" value="Ribosomal_L9_N"/>
    <property type="match status" value="1"/>
</dbReference>
<dbReference type="SUPFAM" id="SSF55658">
    <property type="entry name" value="L9 N-domain-like"/>
    <property type="match status" value="1"/>
</dbReference>
<dbReference type="SUPFAM" id="SSF55653">
    <property type="entry name" value="Ribosomal protein L9 C-domain"/>
    <property type="match status" value="1"/>
</dbReference>
<dbReference type="PROSITE" id="PS00651">
    <property type="entry name" value="RIBOSOMAL_L9"/>
    <property type="match status" value="1"/>
</dbReference>
<name>RL9_CAMJD</name>
<proteinExistence type="inferred from homology"/>
<feature type="chain" id="PRO_1000014762" description="Large ribosomal subunit protein bL9">
    <location>
        <begin position="1"/>
        <end position="147"/>
    </location>
</feature>
<organism>
    <name type="scientific">Campylobacter jejuni subsp. doylei (strain ATCC BAA-1458 / RM4099 / 269.97)</name>
    <dbReference type="NCBI Taxonomy" id="360109"/>
    <lineage>
        <taxon>Bacteria</taxon>
        <taxon>Pseudomonadati</taxon>
        <taxon>Campylobacterota</taxon>
        <taxon>Epsilonproteobacteria</taxon>
        <taxon>Campylobacterales</taxon>
        <taxon>Campylobacteraceae</taxon>
        <taxon>Campylobacter</taxon>
    </lineage>
</organism>
<accession>A7H4F0</accession>
<keyword id="KW-0687">Ribonucleoprotein</keyword>
<keyword id="KW-0689">Ribosomal protein</keyword>
<keyword id="KW-0694">RNA-binding</keyword>
<keyword id="KW-0699">rRNA-binding</keyword>
<protein>
    <recommendedName>
        <fullName evidence="1">Large ribosomal subunit protein bL9</fullName>
    </recommendedName>
    <alternativeName>
        <fullName evidence="2">50S ribosomal protein L9</fullName>
    </alternativeName>
</protein>
<gene>
    <name evidence="1" type="primary">rplI</name>
    <name type="ordered locus">JJD26997_1335</name>
</gene>